<comment type="similarity">
    <text evidence="1">Belongs to the SfsA family.</text>
</comment>
<sequence length="230" mass="26172">MIFEKKTHIVEFVRRPNRFQGYVIIDGKEELVHVPNTGRCKEILIPGCRALIREENGQNRKTRFSLIGAYKGKNLINIDSQIPNKVVEEALINKKINGLEKYTKICREKTFGNSRFDFKLEDPLNNEYYLEVKGVTLEENGLCRFPDAPTERGTKHLLELIEVKNNNIGAGVLFLVQLENVKSFSPNDDTDPKFAAALKKAKSSGVDIFVYKCSVSENHIELSQSVELKL</sequence>
<feature type="chain" id="PRO_1000093567" description="Sugar fermentation stimulation protein homolog">
    <location>
        <begin position="1"/>
        <end position="230"/>
    </location>
</feature>
<proteinExistence type="inferred from homology"/>
<accession>B2V430</accession>
<dbReference type="EMBL" id="CP001078">
    <property type="protein sequence ID" value="ACD51123.1"/>
    <property type="molecule type" value="Genomic_DNA"/>
</dbReference>
<dbReference type="RefSeq" id="WP_012449551.1">
    <property type="nucleotide sequence ID" value="NC_010723.1"/>
</dbReference>
<dbReference type="SMR" id="B2V430"/>
<dbReference type="KEGG" id="cbt:CLH_2039"/>
<dbReference type="HOGENOM" id="CLU_052299_1_0_9"/>
<dbReference type="GO" id="GO:0003677">
    <property type="term" value="F:DNA binding"/>
    <property type="evidence" value="ECO:0007669"/>
    <property type="project" value="InterPro"/>
</dbReference>
<dbReference type="CDD" id="cd22359">
    <property type="entry name" value="SfsA-like_bacterial"/>
    <property type="match status" value="1"/>
</dbReference>
<dbReference type="FunFam" id="2.40.50.580:FF:000002">
    <property type="entry name" value="Sugar fermentation stimulation protein homolog"/>
    <property type="match status" value="1"/>
</dbReference>
<dbReference type="Gene3D" id="2.40.50.580">
    <property type="match status" value="1"/>
</dbReference>
<dbReference type="Gene3D" id="3.40.1350.60">
    <property type="match status" value="1"/>
</dbReference>
<dbReference type="HAMAP" id="MF_00095">
    <property type="entry name" value="SfsA"/>
    <property type="match status" value="1"/>
</dbReference>
<dbReference type="InterPro" id="IPR005224">
    <property type="entry name" value="SfsA"/>
</dbReference>
<dbReference type="InterPro" id="IPR040452">
    <property type="entry name" value="SfsA_C"/>
</dbReference>
<dbReference type="InterPro" id="IPR041465">
    <property type="entry name" value="SfsA_N"/>
</dbReference>
<dbReference type="NCBIfam" id="TIGR00230">
    <property type="entry name" value="sfsA"/>
    <property type="match status" value="1"/>
</dbReference>
<dbReference type="PANTHER" id="PTHR30545">
    <property type="entry name" value="SUGAR FERMENTATION STIMULATION PROTEIN A"/>
    <property type="match status" value="1"/>
</dbReference>
<dbReference type="PANTHER" id="PTHR30545:SF2">
    <property type="entry name" value="SUGAR FERMENTATION STIMULATION PROTEIN A"/>
    <property type="match status" value="1"/>
</dbReference>
<dbReference type="Pfam" id="PF03749">
    <property type="entry name" value="SfsA"/>
    <property type="match status" value="1"/>
</dbReference>
<dbReference type="Pfam" id="PF17746">
    <property type="entry name" value="SfsA_N"/>
    <property type="match status" value="1"/>
</dbReference>
<protein>
    <recommendedName>
        <fullName evidence="1">Sugar fermentation stimulation protein homolog</fullName>
    </recommendedName>
</protein>
<gene>
    <name evidence="1" type="primary">sfsA</name>
    <name type="ordered locus">CLH_2039</name>
</gene>
<name>SFSA_CLOBA</name>
<evidence type="ECO:0000255" key="1">
    <source>
        <dbReference type="HAMAP-Rule" id="MF_00095"/>
    </source>
</evidence>
<reference key="1">
    <citation type="submission" date="2008-05" db="EMBL/GenBank/DDBJ databases">
        <title>Complete genome sequence of Clostridium botulinum E3 str. Alaska E43.</title>
        <authorList>
            <person name="Brinkac L.M."/>
            <person name="Brown J.L."/>
            <person name="Bruce D."/>
            <person name="Detter C."/>
            <person name="Munk C."/>
            <person name="Smith L.A."/>
            <person name="Smith T.J."/>
            <person name="Sutton G."/>
            <person name="Brettin T.S."/>
        </authorList>
    </citation>
    <scope>NUCLEOTIDE SEQUENCE [LARGE SCALE GENOMIC DNA]</scope>
    <source>
        <strain>Alaska E43 / Type E3</strain>
    </source>
</reference>
<organism>
    <name type="scientific">Clostridium botulinum (strain Alaska E43 / Type E3)</name>
    <dbReference type="NCBI Taxonomy" id="508767"/>
    <lineage>
        <taxon>Bacteria</taxon>
        <taxon>Bacillati</taxon>
        <taxon>Bacillota</taxon>
        <taxon>Clostridia</taxon>
        <taxon>Eubacteriales</taxon>
        <taxon>Clostridiaceae</taxon>
        <taxon>Clostridium</taxon>
    </lineage>
</organism>